<protein>
    <recommendedName>
        <fullName>Heat shock 70 kDa protein 4L</fullName>
    </recommendedName>
    <alternativeName>
        <fullName>Heat shock 70-related protein APG-1</fullName>
    </alternativeName>
    <alternativeName>
        <fullName evidence="6">Heat shock protein family H member 3</fullName>
    </alternativeName>
    <alternativeName>
        <fullName>Heat-shock protein family A member 4-like protein</fullName>
        <shortName>HSPA4-like protein</shortName>
    </alternativeName>
    <alternativeName>
        <fullName>Osmotic stress protein 94</fullName>
    </alternativeName>
</protein>
<keyword id="KW-0067">ATP-binding</keyword>
<keyword id="KW-0143">Chaperone</keyword>
<keyword id="KW-0963">Cytoplasm</keyword>
<keyword id="KW-0547">Nucleotide-binding</keyword>
<keyword id="KW-0539">Nucleus</keyword>
<keyword id="KW-0597">Phosphoprotein</keyword>
<keyword id="KW-1267">Proteomics identification</keyword>
<keyword id="KW-1185">Reference proteome</keyword>
<keyword id="KW-0346">Stress response</keyword>
<gene>
    <name type="primary">HSPA4L</name>
    <name type="synonym">APG1</name>
    <name type="synonym">HSPH3</name>
    <name type="synonym">OSP94</name>
</gene>
<reference key="1">
    <citation type="journal article" date="1999" name="Gene">
        <title>Cloning of human cDNAs for Apg-1 and Apg-2, members of the Hsp110 family, and chromosomal assignment of their genes.</title>
        <authorList>
            <person name="Nonoguchi K."/>
            <person name="Itoh K."/>
            <person name="Xue J.H."/>
            <person name="Tokuchi H."/>
            <person name="Nishiyama H."/>
            <person name="Kaneko Y."/>
            <person name="Tatsumi K."/>
            <person name="Okuno H."/>
            <person name="Tomiwa K."/>
            <person name="Fujita J."/>
        </authorList>
    </citation>
    <scope>NUCLEOTIDE SEQUENCE [MRNA]</scope>
    <scope>VARIANT SER-211</scope>
    <source>
        <tissue>Testis</tissue>
    </source>
</reference>
<reference key="2">
    <citation type="journal article" date="2009" name="Mol. Biotechnol.">
        <title>Molecular cloning of OSP94: A significant biomarker protein of hypertensive human heart and a member of HSP110 family.</title>
        <authorList>
            <person name="Mala J.G."/>
            <person name="Takeuchi S."/>
        </authorList>
    </citation>
    <scope>NUCLEOTIDE SEQUENCE [MRNA]</scope>
    <scope>INDUCTION</scope>
    <source>
        <tissue>Heart</tissue>
    </source>
</reference>
<reference key="3">
    <citation type="journal article" date="2005" name="Nature">
        <title>Generation and annotation of the DNA sequences of human chromosomes 2 and 4.</title>
        <authorList>
            <person name="Hillier L.W."/>
            <person name="Graves T.A."/>
            <person name="Fulton R.S."/>
            <person name="Fulton L.A."/>
            <person name="Pepin K.H."/>
            <person name="Minx P."/>
            <person name="Wagner-McPherson C."/>
            <person name="Layman D."/>
            <person name="Wylie K."/>
            <person name="Sekhon M."/>
            <person name="Becker M.C."/>
            <person name="Fewell G.A."/>
            <person name="Delehaunty K.D."/>
            <person name="Miner T.L."/>
            <person name="Nash W.E."/>
            <person name="Kremitzki C."/>
            <person name="Oddy L."/>
            <person name="Du H."/>
            <person name="Sun H."/>
            <person name="Bradshaw-Cordum H."/>
            <person name="Ali J."/>
            <person name="Carter J."/>
            <person name="Cordes M."/>
            <person name="Harris A."/>
            <person name="Isak A."/>
            <person name="van Brunt A."/>
            <person name="Nguyen C."/>
            <person name="Du F."/>
            <person name="Courtney L."/>
            <person name="Kalicki J."/>
            <person name="Ozersky P."/>
            <person name="Abbott S."/>
            <person name="Armstrong J."/>
            <person name="Belter E.A."/>
            <person name="Caruso L."/>
            <person name="Cedroni M."/>
            <person name="Cotton M."/>
            <person name="Davidson T."/>
            <person name="Desai A."/>
            <person name="Elliott G."/>
            <person name="Erb T."/>
            <person name="Fronick C."/>
            <person name="Gaige T."/>
            <person name="Haakenson W."/>
            <person name="Haglund K."/>
            <person name="Holmes A."/>
            <person name="Harkins R."/>
            <person name="Kim K."/>
            <person name="Kruchowski S.S."/>
            <person name="Strong C.M."/>
            <person name="Grewal N."/>
            <person name="Goyea E."/>
            <person name="Hou S."/>
            <person name="Levy A."/>
            <person name="Martinka S."/>
            <person name="Mead K."/>
            <person name="McLellan M.D."/>
            <person name="Meyer R."/>
            <person name="Randall-Maher J."/>
            <person name="Tomlinson C."/>
            <person name="Dauphin-Kohlberg S."/>
            <person name="Kozlowicz-Reilly A."/>
            <person name="Shah N."/>
            <person name="Swearengen-Shahid S."/>
            <person name="Snider J."/>
            <person name="Strong J.T."/>
            <person name="Thompson J."/>
            <person name="Yoakum M."/>
            <person name="Leonard S."/>
            <person name="Pearman C."/>
            <person name="Trani L."/>
            <person name="Radionenko M."/>
            <person name="Waligorski J.E."/>
            <person name="Wang C."/>
            <person name="Rock S.M."/>
            <person name="Tin-Wollam A.-M."/>
            <person name="Maupin R."/>
            <person name="Latreille P."/>
            <person name="Wendl M.C."/>
            <person name="Yang S.-P."/>
            <person name="Pohl C."/>
            <person name="Wallis J.W."/>
            <person name="Spieth J."/>
            <person name="Bieri T.A."/>
            <person name="Berkowicz N."/>
            <person name="Nelson J.O."/>
            <person name="Osborne J."/>
            <person name="Ding L."/>
            <person name="Meyer R."/>
            <person name="Sabo A."/>
            <person name="Shotland Y."/>
            <person name="Sinha P."/>
            <person name="Wohldmann P.E."/>
            <person name="Cook L.L."/>
            <person name="Hickenbotham M.T."/>
            <person name="Eldred J."/>
            <person name="Williams D."/>
            <person name="Jones T.A."/>
            <person name="She X."/>
            <person name="Ciccarelli F.D."/>
            <person name="Izaurralde E."/>
            <person name="Taylor J."/>
            <person name="Schmutz J."/>
            <person name="Myers R.M."/>
            <person name="Cox D.R."/>
            <person name="Huang X."/>
            <person name="McPherson J.D."/>
            <person name="Mardis E.R."/>
            <person name="Clifton S.W."/>
            <person name="Warren W.C."/>
            <person name="Chinwalla A.T."/>
            <person name="Eddy S.R."/>
            <person name="Marra M.A."/>
            <person name="Ovcharenko I."/>
            <person name="Furey T.S."/>
            <person name="Miller W."/>
            <person name="Eichler E.E."/>
            <person name="Bork P."/>
            <person name="Suyama M."/>
            <person name="Torrents D."/>
            <person name="Waterston R.H."/>
            <person name="Wilson R.K."/>
        </authorList>
    </citation>
    <scope>NUCLEOTIDE SEQUENCE [LARGE SCALE GENOMIC DNA]</scope>
</reference>
<reference key="4">
    <citation type="submission" date="2005-09" db="EMBL/GenBank/DDBJ databases">
        <authorList>
            <person name="Mural R.J."/>
            <person name="Istrail S."/>
            <person name="Sutton G."/>
            <person name="Florea L."/>
            <person name="Halpern A.L."/>
            <person name="Mobarry C.M."/>
            <person name="Lippert R."/>
            <person name="Walenz B."/>
            <person name="Shatkay H."/>
            <person name="Dew I."/>
            <person name="Miller J.R."/>
            <person name="Flanigan M.J."/>
            <person name="Edwards N.J."/>
            <person name="Bolanos R."/>
            <person name="Fasulo D."/>
            <person name="Halldorsson B.V."/>
            <person name="Hannenhalli S."/>
            <person name="Turner R."/>
            <person name="Yooseph S."/>
            <person name="Lu F."/>
            <person name="Nusskern D.R."/>
            <person name="Shue B.C."/>
            <person name="Zheng X.H."/>
            <person name="Zhong F."/>
            <person name="Delcher A.L."/>
            <person name="Huson D.H."/>
            <person name="Kravitz S.A."/>
            <person name="Mouchard L."/>
            <person name="Reinert K."/>
            <person name="Remington K.A."/>
            <person name="Clark A.G."/>
            <person name="Waterman M.S."/>
            <person name="Eichler E.E."/>
            <person name="Adams M.D."/>
            <person name="Hunkapiller M.W."/>
            <person name="Myers E.W."/>
            <person name="Venter J.C."/>
        </authorList>
    </citation>
    <scope>NUCLEOTIDE SEQUENCE [LARGE SCALE GENOMIC DNA]</scope>
</reference>
<reference key="5">
    <citation type="journal article" date="2004" name="Genome Res.">
        <title>The status, quality, and expansion of the NIH full-length cDNA project: the Mammalian Gene Collection (MGC).</title>
        <authorList>
            <consortium name="The MGC Project Team"/>
        </authorList>
    </citation>
    <scope>NUCLEOTIDE SEQUENCE [LARGE SCALE MRNA]</scope>
</reference>
<reference key="6">
    <citation type="journal article" date="2007" name="Science">
        <title>ATM and ATR substrate analysis reveals extensive protein networks responsive to DNA damage.</title>
        <authorList>
            <person name="Matsuoka S."/>
            <person name="Ballif B.A."/>
            <person name="Smogorzewska A."/>
            <person name="McDonald E.R. III"/>
            <person name="Hurov K.E."/>
            <person name="Luo J."/>
            <person name="Bakalarski C.E."/>
            <person name="Zhao Z."/>
            <person name="Solimini N."/>
            <person name="Lerenthal Y."/>
            <person name="Shiloh Y."/>
            <person name="Gygi S.P."/>
            <person name="Elledge S.J."/>
        </authorList>
    </citation>
    <scope>PHOSPHORYLATION [LARGE SCALE ANALYSIS] AT THR-761</scope>
    <scope>IDENTIFICATION BY MASS SPECTROMETRY [LARGE SCALE ANALYSIS]</scope>
    <source>
        <tissue>Embryonic kidney</tissue>
    </source>
</reference>
<reference key="7">
    <citation type="journal article" date="2008" name="Proc. Natl. Acad. Sci. U.S.A.">
        <title>A quantitative atlas of mitotic phosphorylation.</title>
        <authorList>
            <person name="Dephoure N."/>
            <person name="Zhou C."/>
            <person name="Villen J."/>
            <person name="Beausoleil S.A."/>
            <person name="Bakalarski C.E."/>
            <person name="Elledge S.J."/>
            <person name="Gygi S.P."/>
        </authorList>
    </citation>
    <scope>IDENTIFICATION BY MASS SPECTROMETRY [LARGE SCALE ANALYSIS]</scope>
    <source>
        <tissue>Cervix carcinoma</tissue>
    </source>
</reference>
<reference key="8">
    <citation type="journal article" date="2009" name="Cell Stress Chaperones">
        <title>Guidelines for the nomenclature of the human heat shock proteins.</title>
        <authorList>
            <person name="Kampinga H.H."/>
            <person name="Hageman J."/>
            <person name="Vos M.J."/>
            <person name="Kubota H."/>
            <person name="Tanguay R.M."/>
            <person name="Bruford E.A."/>
            <person name="Cheetham M.E."/>
            <person name="Chen B."/>
            <person name="Hightower L.E."/>
        </authorList>
    </citation>
    <scope>NOMENCLATURE</scope>
</reference>
<reference key="9">
    <citation type="journal article" date="2011" name="BMC Syst. Biol.">
        <title>Initial characterization of the human central proteome.</title>
        <authorList>
            <person name="Burkard T.R."/>
            <person name="Planyavsky M."/>
            <person name="Kaupe I."/>
            <person name="Breitwieser F.P."/>
            <person name="Buerckstuemmer T."/>
            <person name="Bennett K.L."/>
            <person name="Superti-Furga G."/>
            <person name="Colinge J."/>
        </authorList>
    </citation>
    <scope>IDENTIFICATION BY MASS SPECTROMETRY [LARGE SCALE ANALYSIS]</scope>
</reference>
<reference key="10">
    <citation type="journal article" date="2013" name="J. Proteome Res.">
        <title>Toward a comprehensive characterization of a human cancer cell phosphoproteome.</title>
        <authorList>
            <person name="Zhou H."/>
            <person name="Di Palma S."/>
            <person name="Preisinger C."/>
            <person name="Peng M."/>
            <person name="Polat A.N."/>
            <person name="Heck A.J."/>
            <person name="Mohammed S."/>
        </authorList>
    </citation>
    <scope>PHOSPHORYLATION [LARGE SCALE ANALYSIS] AT SER-74; SER-508 AND SER-579</scope>
    <scope>IDENTIFICATION BY MASS SPECTROMETRY [LARGE SCALE ANALYSIS]</scope>
    <source>
        <tissue>Cervix carcinoma</tissue>
        <tissue>Erythroleukemia</tissue>
    </source>
</reference>
<proteinExistence type="evidence at protein level"/>
<evidence type="ECO:0000250" key="1"/>
<evidence type="ECO:0000250" key="2">
    <source>
        <dbReference type="UniProtKB" id="P48722"/>
    </source>
</evidence>
<evidence type="ECO:0000256" key="3">
    <source>
        <dbReference type="SAM" id="MobiDB-lite"/>
    </source>
</evidence>
<evidence type="ECO:0000269" key="4">
    <source>
    </source>
</evidence>
<evidence type="ECO:0000269" key="5">
    <source>
    </source>
</evidence>
<evidence type="ECO:0000303" key="6">
    <source>
    </source>
</evidence>
<evidence type="ECO:0000305" key="7"/>
<evidence type="ECO:0007744" key="8">
    <source>
    </source>
</evidence>
<evidence type="ECO:0007744" key="9">
    <source>
    </source>
</evidence>
<accession>O95757</accession>
<accession>A2ICT2</accession>
<accession>Q4W5M5</accession>
<accession>Q8IWA2</accession>
<sequence length="839" mass="94512">MSVVGIDLGFLNCYIAVARSGGIETIANEYSDRCTPACISLGSRTRAIGNAAKSQIVTNVRNTIHGFKKLHGRSFDDPIVQTERIRLPYELQKMPNGSAGVKVRYLEEERPFAIEQVTGMLLAKLKETSENALKKPVADCVISIPSFFTDAERRSVMAAAQVAGLNCLRLMNETTAVALAYGIYKQDLPPLDEKPRNVVFIDMGHSAYQVLVCAFNKGKLKVLATTFDPYLGGRNFDEALVDYFCDEFKTKYKINVKENSRALLRLYQECEKLKKLMSANASDLPLNIECFMNDLDVSSKMNRAQFEQLCASLLARVEPPLKAVMEQANLQREDISSIEIVGGATRIPAVKEQITKFFLKDISTTLNADEAVARGCALQCAILSPAFKVREFSITDLVPYSITLRWKTSFEDGSGECEVFCKNHPAPFSKVITFHKKEPFELEAFYTNLHEVPYPDARIGSFTIQNVFPQSDGDSSKVKVKVRVNIHGIFSVASASVIEKQNLEGDHSDAPMETETSFKNENKDNMDKMQVDQEEGHQKCHAEHTPEEEIDHTGAKTKSAVSDKQDRLNQTLKKGKVKSIDLPIQSSLCRQLGQDLLNSYIENEGKMIMQDKLEKERNDAKNAVEEYVYDFRDRLGTVYEKFITPEDLSKLSAVLEDTENWLYEDGEDQPKQVYVDKLQELKKYGQPIQMKYMEHEERPKALNDLGKKIQLVMKVIEAYRNKDERYDHLDPTEMEKVEKCISDAMSWLNSKMNAQNKLSLTQDPVVKVSEIVAKSKELDNFCNPIIYKPKPKAEVPEDKPKANSEHNGPMDGQSGTETKSDSTKDSSQHTKSSGEMEVD</sequence>
<dbReference type="EMBL" id="AB023421">
    <property type="protein sequence ID" value="BAA75063.1"/>
    <property type="molecule type" value="mRNA"/>
</dbReference>
<dbReference type="EMBL" id="EF197155">
    <property type="protein sequence ID" value="ABM69040.1"/>
    <property type="molecule type" value="mRNA"/>
</dbReference>
<dbReference type="EMBL" id="AC093591">
    <property type="protein sequence ID" value="AAY40975.1"/>
    <property type="molecule type" value="Genomic_DNA"/>
</dbReference>
<dbReference type="EMBL" id="CH471056">
    <property type="protein sequence ID" value="EAX05198.1"/>
    <property type="molecule type" value="Genomic_DNA"/>
</dbReference>
<dbReference type="EMBL" id="BC040560">
    <property type="protein sequence ID" value="AAH40560.1"/>
    <property type="molecule type" value="mRNA"/>
</dbReference>
<dbReference type="CCDS" id="CCDS3734.1"/>
<dbReference type="RefSeq" id="NP_001304310.1">
    <property type="nucleotide sequence ID" value="NM_001317381.1"/>
</dbReference>
<dbReference type="RefSeq" id="NP_001304311.1">
    <property type="nucleotide sequence ID" value="NM_001317382.1"/>
</dbReference>
<dbReference type="RefSeq" id="NP_001304312.1">
    <property type="nucleotide sequence ID" value="NM_001317383.1"/>
</dbReference>
<dbReference type="RefSeq" id="NP_055093.2">
    <property type="nucleotide sequence ID" value="NM_014278.3"/>
</dbReference>
<dbReference type="SMR" id="O95757"/>
<dbReference type="BioGRID" id="116500">
    <property type="interactions" value="253"/>
</dbReference>
<dbReference type="FunCoup" id="O95757">
    <property type="interactions" value="3518"/>
</dbReference>
<dbReference type="IntAct" id="O95757">
    <property type="interactions" value="83"/>
</dbReference>
<dbReference type="MINT" id="O95757"/>
<dbReference type="STRING" id="9606.ENSP00000296464"/>
<dbReference type="ChEMBL" id="CHEMBL5465282"/>
<dbReference type="GlyCosmos" id="O95757">
    <property type="glycosylation" value="1 site, 1 glycan"/>
</dbReference>
<dbReference type="GlyGen" id="O95757">
    <property type="glycosylation" value="1 site, 1 O-linked glycan (1 site)"/>
</dbReference>
<dbReference type="iPTMnet" id="O95757"/>
<dbReference type="MetOSite" id="O95757"/>
<dbReference type="PhosphoSitePlus" id="O95757"/>
<dbReference type="SwissPalm" id="O95757"/>
<dbReference type="BioMuta" id="HSPA4L"/>
<dbReference type="REPRODUCTION-2DPAGE" id="IPI00295485"/>
<dbReference type="jPOST" id="O95757"/>
<dbReference type="MassIVE" id="O95757"/>
<dbReference type="PaxDb" id="9606-ENSP00000296464"/>
<dbReference type="PeptideAtlas" id="O95757"/>
<dbReference type="ProteomicsDB" id="51027"/>
<dbReference type="Pumba" id="O95757"/>
<dbReference type="Antibodypedia" id="26922">
    <property type="antibodies" value="145 antibodies from 27 providers"/>
</dbReference>
<dbReference type="DNASU" id="22824"/>
<dbReference type="Ensembl" id="ENST00000296464.9">
    <property type="protein sequence ID" value="ENSP00000296464.3"/>
    <property type="gene ID" value="ENSG00000164070.12"/>
</dbReference>
<dbReference type="Ensembl" id="ENST00000508776.5">
    <property type="protein sequence ID" value="ENSP00000422482.1"/>
    <property type="gene ID" value="ENSG00000164070.12"/>
</dbReference>
<dbReference type="GeneID" id="22824"/>
<dbReference type="KEGG" id="hsa:22824"/>
<dbReference type="MANE-Select" id="ENST00000296464.9">
    <property type="protein sequence ID" value="ENSP00000296464.3"/>
    <property type="RefSeq nucleotide sequence ID" value="NM_014278.4"/>
    <property type="RefSeq protein sequence ID" value="NP_055093.2"/>
</dbReference>
<dbReference type="UCSC" id="uc003ifm.4">
    <property type="organism name" value="human"/>
</dbReference>
<dbReference type="AGR" id="HGNC:17041"/>
<dbReference type="CTD" id="22824"/>
<dbReference type="DisGeNET" id="22824"/>
<dbReference type="GeneCards" id="HSPA4L"/>
<dbReference type="HGNC" id="HGNC:17041">
    <property type="gene designation" value="HSPA4L"/>
</dbReference>
<dbReference type="HPA" id="ENSG00000164070">
    <property type="expression patterns" value="Tissue enriched (testis)"/>
</dbReference>
<dbReference type="MIM" id="619077">
    <property type="type" value="gene"/>
</dbReference>
<dbReference type="neXtProt" id="NX_O95757"/>
<dbReference type="OpenTargets" id="ENSG00000164070"/>
<dbReference type="PharmGKB" id="PA134905749"/>
<dbReference type="VEuPathDB" id="HostDB:ENSG00000164070"/>
<dbReference type="eggNOG" id="KOG0103">
    <property type="taxonomic scope" value="Eukaryota"/>
</dbReference>
<dbReference type="GeneTree" id="ENSGT00940000158736"/>
<dbReference type="HOGENOM" id="CLU_005965_5_1_1"/>
<dbReference type="InParanoid" id="O95757"/>
<dbReference type="OMA" id="TGAKTKX"/>
<dbReference type="OrthoDB" id="434160at2759"/>
<dbReference type="PAN-GO" id="O95757">
    <property type="GO annotations" value="3 GO annotations based on evolutionary models"/>
</dbReference>
<dbReference type="PhylomeDB" id="O95757"/>
<dbReference type="TreeFam" id="TF105043"/>
<dbReference type="PathwayCommons" id="O95757"/>
<dbReference type="Reactome" id="R-HSA-3371453">
    <property type="pathway name" value="Regulation of HSF1-mediated heat shock response"/>
</dbReference>
<dbReference type="SignaLink" id="O95757"/>
<dbReference type="BioGRID-ORCS" id="22824">
    <property type="hits" value="11 hits in 1156 CRISPR screens"/>
</dbReference>
<dbReference type="CD-CODE" id="91857CE7">
    <property type="entry name" value="Nucleolus"/>
</dbReference>
<dbReference type="CD-CODE" id="FB4E32DD">
    <property type="entry name" value="Presynaptic clusters and postsynaptic densities"/>
</dbReference>
<dbReference type="ChiTaRS" id="HSPA4L">
    <property type="organism name" value="human"/>
</dbReference>
<dbReference type="GeneWiki" id="HSPA4L"/>
<dbReference type="GenomeRNAi" id="22824"/>
<dbReference type="Pharos" id="O95757">
    <property type="development level" value="Tbio"/>
</dbReference>
<dbReference type="PRO" id="PR:O95757"/>
<dbReference type="Proteomes" id="UP000005640">
    <property type="component" value="Chromosome 4"/>
</dbReference>
<dbReference type="RNAct" id="O95757">
    <property type="molecule type" value="protein"/>
</dbReference>
<dbReference type="Bgee" id="ENSG00000164070">
    <property type="expression patterns" value="Expressed in sperm and 168 other cell types or tissues"/>
</dbReference>
<dbReference type="ExpressionAtlas" id="O95757">
    <property type="expression patterns" value="baseline and differential"/>
</dbReference>
<dbReference type="GO" id="GO:0005737">
    <property type="term" value="C:cytoplasm"/>
    <property type="evidence" value="ECO:0000250"/>
    <property type="project" value="UniProtKB"/>
</dbReference>
<dbReference type="GO" id="GO:0005829">
    <property type="term" value="C:cytosol"/>
    <property type="evidence" value="ECO:0000314"/>
    <property type="project" value="UniProtKB"/>
</dbReference>
<dbReference type="GO" id="GO:0005634">
    <property type="term" value="C:nucleus"/>
    <property type="evidence" value="ECO:0000250"/>
    <property type="project" value="UniProtKB"/>
</dbReference>
<dbReference type="GO" id="GO:0000774">
    <property type="term" value="F:adenyl-nucleotide exchange factor activity"/>
    <property type="evidence" value="ECO:0000318"/>
    <property type="project" value="GO_Central"/>
</dbReference>
<dbReference type="GO" id="GO:0005524">
    <property type="term" value="F:ATP binding"/>
    <property type="evidence" value="ECO:0000250"/>
    <property type="project" value="UniProtKB"/>
</dbReference>
<dbReference type="GO" id="GO:0140662">
    <property type="term" value="F:ATP-dependent protein folding chaperone"/>
    <property type="evidence" value="ECO:0007669"/>
    <property type="project" value="InterPro"/>
</dbReference>
<dbReference type="GO" id="GO:0006457">
    <property type="term" value="P:protein folding"/>
    <property type="evidence" value="ECO:0000250"/>
    <property type="project" value="UniProtKB"/>
</dbReference>
<dbReference type="GO" id="GO:0006986">
    <property type="term" value="P:response to unfolded protein"/>
    <property type="evidence" value="ECO:0000250"/>
    <property type="project" value="UniProtKB"/>
</dbReference>
<dbReference type="CDD" id="cd11738">
    <property type="entry name" value="ASKHA_NBD_HSP70_HSPA4L"/>
    <property type="match status" value="1"/>
</dbReference>
<dbReference type="FunFam" id="1.20.1270.10:FF:000002">
    <property type="entry name" value="Heat shock 70 kDa protein 4"/>
    <property type="match status" value="1"/>
</dbReference>
<dbReference type="FunFam" id="3.30.30.30:FF:000002">
    <property type="entry name" value="Heat shock 70 kDa protein 4"/>
    <property type="match status" value="1"/>
</dbReference>
<dbReference type="FunFam" id="3.30.420.40:FF:000171">
    <property type="entry name" value="Heat shock 70 kDa protein 4"/>
    <property type="match status" value="1"/>
</dbReference>
<dbReference type="FunFam" id="3.90.640.10:FF:000004">
    <property type="entry name" value="Heat shock 70 kDa protein 4"/>
    <property type="match status" value="1"/>
</dbReference>
<dbReference type="FunFam" id="3.30.420.40:FF:000495">
    <property type="entry name" value="Heat shock protein 4b"/>
    <property type="match status" value="1"/>
</dbReference>
<dbReference type="FunFam" id="3.30.420.40:FF:000767">
    <property type="entry name" value="Heat shock protein 70 (HSP70)-4, putative"/>
    <property type="match status" value="2"/>
</dbReference>
<dbReference type="FunFam" id="1.20.1270.10:FF:000017">
    <property type="entry name" value="Heat shock protein family A (Hsp70) member 4"/>
    <property type="match status" value="1"/>
</dbReference>
<dbReference type="FunFam" id="2.60.34.10:FF:000030">
    <property type="entry name" value="Heat shock protein family A (Hsp70) member 4 like"/>
    <property type="match status" value="1"/>
</dbReference>
<dbReference type="Gene3D" id="1.20.1270.10">
    <property type="match status" value="2"/>
</dbReference>
<dbReference type="Gene3D" id="3.30.30.30">
    <property type="match status" value="1"/>
</dbReference>
<dbReference type="Gene3D" id="3.30.420.40">
    <property type="match status" value="2"/>
</dbReference>
<dbReference type="Gene3D" id="3.90.640.10">
    <property type="entry name" value="Actin, Chain A, domain 4"/>
    <property type="match status" value="1"/>
</dbReference>
<dbReference type="Gene3D" id="2.60.34.10">
    <property type="entry name" value="Substrate Binding Domain Of DNAk, Chain A, domain 1"/>
    <property type="match status" value="1"/>
</dbReference>
<dbReference type="InterPro" id="IPR043129">
    <property type="entry name" value="ATPase_NBD"/>
</dbReference>
<dbReference type="InterPro" id="IPR018181">
    <property type="entry name" value="Heat_shock_70_CS"/>
</dbReference>
<dbReference type="InterPro" id="IPR029048">
    <property type="entry name" value="HSP70_C_sf"/>
</dbReference>
<dbReference type="InterPro" id="IPR029047">
    <property type="entry name" value="HSP70_peptide-bd_sf"/>
</dbReference>
<dbReference type="InterPro" id="IPR013126">
    <property type="entry name" value="Hsp_70_fam"/>
</dbReference>
<dbReference type="InterPro" id="IPR042708">
    <property type="entry name" value="HSPA4L_NBD"/>
</dbReference>
<dbReference type="PANTHER" id="PTHR45639:SF5">
    <property type="entry name" value="HEAT SHOCK 70 KDA PROTEIN 4L"/>
    <property type="match status" value="1"/>
</dbReference>
<dbReference type="PANTHER" id="PTHR45639">
    <property type="entry name" value="HSC70CB, ISOFORM G-RELATED"/>
    <property type="match status" value="1"/>
</dbReference>
<dbReference type="Pfam" id="PF00012">
    <property type="entry name" value="HSP70"/>
    <property type="match status" value="2"/>
</dbReference>
<dbReference type="PRINTS" id="PR00301">
    <property type="entry name" value="HEATSHOCK70"/>
</dbReference>
<dbReference type="SUPFAM" id="SSF53067">
    <property type="entry name" value="Actin-like ATPase domain"/>
    <property type="match status" value="2"/>
</dbReference>
<dbReference type="SUPFAM" id="SSF100934">
    <property type="entry name" value="Heat shock protein 70kD (HSP70), C-terminal subdomain"/>
    <property type="match status" value="2"/>
</dbReference>
<dbReference type="SUPFAM" id="SSF100920">
    <property type="entry name" value="Heat shock protein 70kD (HSP70), peptide-binding domain"/>
    <property type="match status" value="1"/>
</dbReference>
<dbReference type="PROSITE" id="PS01036">
    <property type="entry name" value="HSP70_3"/>
    <property type="match status" value="1"/>
</dbReference>
<comment type="function">
    <text evidence="1">Possesses chaperone activity in vitro where it inhibits aggregation of citrate synthase.</text>
</comment>
<comment type="subunit">
    <text evidence="1">Homodimer.</text>
</comment>
<comment type="subcellular location">
    <subcellularLocation>
        <location evidence="1">Cytoplasm</location>
    </subcellularLocation>
    <subcellularLocation>
        <location evidence="1">Nucleus</location>
    </subcellularLocation>
    <text evidence="1">May translocate to the nucleus after heat shock.</text>
</comment>
<comment type="induction">
    <text evidence="5">By heat shock and osmotic imbalance.</text>
</comment>
<comment type="similarity">
    <text evidence="7">Belongs to the heat shock protein 70 family.</text>
</comment>
<name>HS74L_HUMAN</name>
<organism>
    <name type="scientific">Homo sapiens</name>
    <name type="common">Human</name>
    <dbReference type="NCBI Taxonomy" id="9606"/>
    <lineage>
        <taxon>Eukaryota</taxon>
        <taxon>Metazoa</taxon>
        <taxon>Chordata</taxon>
        <taxon>Craniata</taxon>
        <taxon>Vertebrata</taxon>
        <taxon>Euteleostomi</taxon>
        <taxon>Mammalia</taxon>
        <taxon>Eutheria</taxon>
        <taxon>Euarchontoglires</taxon>
        <taxon>Primates</taxon>
        <taxon>Haplorrhini</taxon>
        <taxon>Catarrhini</taxon>
        <taxon>Hominidae</taxon>
        <taxon>Homo</taxon>
    </lineage>
</organism>
<feature type="chain" id="PRO_0000078280" description="Heat shock 70 kDa protein 4L">
    <location>
        <begin position="1"/>
        <end position="839"/>
    </location>
</feature>
<feature type="region of interest" description="Disordered" evidence="3">
    <location>
        <begin position="503"/>
        <end position="567"/>
    </location>
</feature>
<feature type="region of interest" description="Disordered" evidence="3">
    <location>
        <begin position="786"/>
        <end position="839"/>
    </location>
</feature>
<feature type="compositionally biased region" description="Basic and acidic residues" evidence="3">
    <location>
        <begin position="503"/>
        <end position="554"/>
    </location>
</feature>
<feature type="compositionally biased region" description="Basic and acidic residues" evidence="3">
    <location>
        <begin position="791"/>
        <end position="804"/>
    </location>
</feature>
<feature type="compositionally biased region" description="Basic and acidic residues" evidence="3">
    <location>
        <begin position="818"/>
        <end position="839"/>
    </location>
</feature>
<feature type="modified residue" description="Phosphoserine" evidence="9">
    <location>
        <position position="74"/>
    </location>
</feature>
<feature type="modified residue" description="Phosphoserine" evidence="9">
    <location>
        <position position="508"/>
    </location>
</feature>
<feature type="modified residue" description="Phosphothreonine" evidence="2">
    <location>
        <position position="545"/>
    </location>
</feature>
<feature type="modified residue" description="Phosphoserine" evidence="9">
    <location>
        <position position="579"/>
    </location>
</feature>
<feature type="modified residue" description="Phosphothreonine" evidence="8">
    <location>
        <position position="761"/>
    </location>
</feature>
<feature type="sequence variant" id="VAR_025405" description="In dbSNP:rs1380154." evidence="4">
    <original>L</original>
    <variation>S</variation>
    <location>
        <position position="211"/>
    </location>
</feature>
<feature type="sequence variant" id="VAR_031214" description="In dbSNP:rs12507229.">
    <original>N</original>
    <variation>T</variation>
    <location>
        <position position="216"/>
    </location>
</feature>
<feature type="sequence variant" id="VAR_055966" description="In dbSNP:rs35518193.">
    <original>I</original>
    <variation>T</variation>
    <location>
        <position position="601"/>
    </location>
</feature>
<feature type="sequence conflict" description="In Ref. 1; BAA75063." evidence="7" ref="1">
    <original>H</original>
    <variation>R</variation>
    <location>
        <position position="806"/>
    </location>
</feature>